<feature type="chain" id="PRO_1000062933" description="Transcriptional regulator MraZ">
    <location>
        <begin position="1"/>
        <end position="152"/>
    </location>
</feature>
<feature type="domain" description="SpoVT-AbrB 1" evidence="2">
    <location>
        <begin position="5"/>
        <end position="52"/>
    </location>
</feature>
<feature type="domain" description="SpoVT-AbrB 2" evidence="2">
    <location>
        <begin position="81"/>
        <end position="124"/>
    </location>
</feature>
<reference key="1">
    <citation type="submission" date="2007-03" db="EMBL/GenBank/DDBJ databases">
        <title>Complete sequence of Shewanella loihica PV-4.</title>
        <authorList>
            <consortium name="US DOE Joint Genome Institute"/>
            <person name="Copeland A."/>
            <person name="Lucas S."/>
            <person name="Lapidus A."/>
            <person name="Barry K."/>
            <person name="Detter J.C."/>
            <person name="Glavina del Rio T."/>
            <person name="Hammon N."/>
            <person name="Israni S."/>
            <person name="Dalin E."/>
            <person name="Tice H."/>
            <person name="Pitluck S."/>
            <person name="Chain P."/>
            <person name="Malfatti S."/>
            <person name="Shin M."/>
            <person name="Vergez L."/>
            <person name="Schmutz J."/>
            <person name="Larimer F."/>
            <person name="Land M."/>
            <person name="Hauser L."/>
            <person name="Kyrpides N."/>
            <person name="Mikhailova N."/>
            <person name="Romine M.F."/>
            <person name="Serres G."/>
            <person name="Fredrickson J."/>
            <person name="Tiedje J."/>
            <person name="Richardson P."/>
        </authorList>
    </citation>
    <scope>NUCLEOTIDE SEQUENCE [LARGE SCALE GENOMIC DNA]</scope>
    <source>
        <strain>ATCC BAA-1088 / PV-4</strain>
    </source>
</reference>
<name>MRAZ_SHELP</name>
<protein>
    <recommendedName>
        <fullName>Transcriptional regulator MraZ</fullName>
    </recommendedName>
</protein>
<dbReference type="EMBL" id="CP000606">
    <property type="protein sequence ID" value="ABO25328.1"/>
    <property type="molecule type" value="Genomic_DNA"/>
</dbReference>
<dbReference type="RefSeq" id="WP_011867258.1">
    <property type="nucleotide sequence ID" value="NC_009092.1"/>
</dbReference>
<dbReference type="SMR" id="A3QIN0"/>
<dbReference type="STRING" id="323850.Shew_3462"/>
<dbReference type="KEGG" id="slo:Shew_3462"/>
<dbReference type="eggNOG" id="COG2001">
    <property type="taxonomic scope" value="Bacteria"/>
</dbReference>
<dbReference type="HOGENOM" id="CLU_107907_2_0_6"/>
<dbReference type="OrthoDB" id="9807753at2"/>
<dbReference type="Proteomes" id="UP000001558">
    <property type="component" value="Chromosome"/>
</dbReference>
<dbReference type="GO" id="GO:0005737">
    <property type="term" value="C:cytoplasm"/>
    <property type="evidence" value="ECO:0007669"/>
    <property type="project" value="UniProtKB-UniRule"/>
</dbReference>
<dbReference type="GO" id="GO:0009295">
    <property type="term" value="C:nucleoid"/>
    <property type="evidence" value="ECO:0007669"/>
    <property type="project" value="UniProtKB-SubCell"/>
</dbReference>
<dbReference type="GO" id="GO:0003700">
    <property type="term" value="F:DNA-binding transcription factor activity"/>
    <property type="evidence" value="ECO:0007669"/>
    <property type="project" value="UniProtKB-UniRule"/>
</dbReference>
<dbReference type="GO" id="GO:0000976">
    <property type="term" value="F:transcription cis-regulatory region binding"/>
    <property type="evidence" value="ECO:0007669"/>
    <property type="project" value="TreeGrafter"/>
</dbReference>
<dbReference type="GO" id="GO:2000143">
    <property type="term" value="P:negative regulation of DNA-templated transcription initiation"/>
    <property type="evidence" value="ECO:0007669"/>
    <property type="project" value="TreeGrafter"/>
</dbReference>
<dbReference type="CDD" id="cd16321">
    <property type="entry name" value="MraZ_C"/>
    <property type="match status" value="1"/>
</dbReference>
<dbReference type="CDD" id="cd16320">
    <property type="entry name" value="MraZ_N"/>
    <property type="match status" value="1"/>
</dbReference>
<dbReference type="Gene3D" id="3.40.1550.20">
    <property type="entry name" value="Transcriptional regulator MraZ domain"/>
    <property type="match status" value="1"/>
</dbReference>
<dbReference type="HAMAP" id="MF_01008">
    <property type="entry name" value="MraZ"/>
    <property type="match status" value="1"/>
</dbReference>
<dbReference type="InterPro" id="IPR003444">
    <property type="entry name" value="MraZ"/>
</dbReference>
<dbReference type="InterPro" id="IPR035644">
    <property type="entry name" value="MraZ_C"/>
</dbReference>
<dbReference type="InterPro" id="IPR020603">
    <property type="entry name" value="MraZ_dom"/>
</dbReference>
<dbReference type="InterPro" id="IPR035642">
    <property type="entry name" value="MraZ_N"/>
</dbReference>
<dbReference type="InterPro" id="IPR038619">
    <property type="entry name" value="MraZ_sf"/>
</dbReference>
<dbReference type="InterPro" id="IPR007159">
    <property type="entry name" value="SpoVT-AbrB_dom"/>
</dbReference>
<dbReference type="InterPro" id="IPR037914">
    <property type="entry name" value="SpoVT-AbrB_sf"/>
</dbReference>
<dbReference type="NCBIfam" id="TIGR00242">
    <property type="entry name" value="division/cell wall cluster transcriptional repressor MraZ"/>
    <property type="match status" value="1"/>
</dbReference>
<dbReference type="PANTHER" id="PTHR34701">
    <property type="entry name" value="TRANSCRIPTIONAL REGULATOR MRAZ"/>
    <property type="match status" value="1"/>
</dbReference>
<dbReference type="PANTHER" id="PTHR34701:SF1">
    <property type="entry name" value="TRANSCRIPTIONAL REGULATOR MRAZ"/>
    <property type="match status" value="1"/>
</dbReference>
<dbReference type="Pfam" id="PF02381">
    <property type="entry name" value="MraZ"/>
    <property type="match status" value="2"/>
</dbReference>
<dbReference type="SUPFAM" id="SSF89447">
    <property type="entry name" value="AbrB/MazE/MraZ-like"/>
    <property type="match status" value="1"/>
</dbReference>
<dbReference type="PROSITE" id="PS51740">
    <property type="entry name" value="SPOVT_ABRB"/>
    <property type="match status" value="2"/>
</dbReference>
<proteinExistence type="inferred from homology"/>
<keyword id="KW-0963">Cytoplasm</keyword>
<keyword id="KW-0238">DNA-binding</keyword>
<keyword id="KW-1185">Reference proteome</keyword>
<keyword id="KW-0677">Repeat</keyword>
<keyword id="KW-0804">Transcription</keyword>
<keyword id="KW-0805">Transcription regulation</keyword>
<gene>
    <name evidence="1" type="primary">mraZ</name>
    <name type="ordered locus">Shew_3462</name>
</gene>
<evidence type="ECO:0000255" key="1">
    <source>
        <dbReference type="HAMAP-Rule" id="MF_01008"/>
    </source>
</evidence>
<evidence type="ECO:0000255" key="2">
    <source>
        <dbReference type="PROSITE-ProRule" id="PRU01076"/>
    </source>
</evidence>
<sequence length="152" mass="17355">MFRGASAINLDAKGRIAIPKRYRERLHVDFNSQLVITVDFDAACLLIYPLEAWKAIEAKLLLLSDTQGPERAMKRLLLGYAHECELDSNGRLLLPPPLRQYANLDKHAMLVGQLNKFELWDEAAWQQQIELSRETIQSDAFANSERLADFSL</sequence>
<accession>A3QIN0</accession>
<comment type="subunit">
    <text evidence="1">Forms oligomers.</text>
</comment>
<comment type="subcellular location">
    <subcellularLocation>
        <location evidence="1">Cytoplasm</location>
        <location evidence="1">Nucleoid</location>
    </subcellularLocation>
</comment>
<comment type="similarity">
    <text evidence="1">Belongs to the MraZ family.</text>
</comment>
<organism>
    <name type="scientific">Shewanella loihica (strain ATCC BAA-1088 / PV-4)</name>
    <dbReference type="NCBI Taxonomy" id="323850"/>
    <lineage>
        <taxon>Bacteria</taxon>
        <taxon>Pseudomonadati</taxon>
        <taxon>Pseudomonadota</taxon>
        <taxon>Gammaproteobacteria</taxon>
        <taxon>Alteromonadales</taxon>
        <taxon>Shewanellaceae</taxon>
        <taxon>Shewanella</taxon>
    </lineage>
</organism>